<comment type="function">
    <text evidence="1">NDH-1 shuttles electrons from NADH, via FMN and iron-sulfur (Fe-S) centers, to quinones in the respiratory chain. The immediate electron acceptor for the enzyme in this species is believed to be ubiquinone. Couples the redox reaction to proton translocation (for every two electrons transferred, four hydrogen ions are translocated across the cytoplasmic membrane), and thus conserves the redox energy in a proton gradient.</text>
</comment>
<comment type="catalytic activity">
    <reaction evidence="1">
        <text>a quinone + NADH + 5 H(+)(in) = a quinol + NAD(+) + 4 H(+)(out)</text>
        <dbReference type="Rhea" id="RHEA:57888"/>
        <dbReference type="ChEBI" id="CHEBI:15378"/>
        <dbReference type="ChEBI" id="CHEBI:24646"/>
        <dbReference type="ChEBI" id="CHEBI:57540"/>
        <dbReference type="ChEBI" id="CHEBI:57945"/>
        <dbReference type="ChEBI" id="CHEBI:132124"/>
    </reaction>
</comment>
<comment type="cofactor">
    <cofactor evidence="1">
        <name>[4Fe-4S] cluster</name>
        <dbReference type="ChEBI" id="CHEBI:49883"/>
    </cofactor>
    <text evidence="1">Binds 2 [4Fe-4S] clusters per subunit.</text>
</comment>
<comment type="subunit">
    <text evidence="1">NDH-1 is composed of 14 different subunits. Subunits NuoA, H, J, K, L, M, N constitute the membrane sector of the complex.</text>
</comment>
<comment type="subcellular location">
    <subcellularLocation>
        <location evidence="1">Cell inner membrane</location>
        <topology evidence="1">Peripheral membrane protein</topology>
    </subcellularLocation>
</comment>
<comment type="similarity">
    <text evidence="1">Belongs to the complex I 23 kDa subunit family.</text>
</comment>
<sequence length="205" mass="23540">MDLKQKYIFIEGTNCPVTVRGRLLQVFRRSVSGELFKGLWLVLREMLRFNIHTTQYPKEKLPLSPRYRAIHELLRLLESGNERCIGCGLCEKICISNCIRMETSYGEDGRKKVHEYTINFGRCIFCGFCAEVCPELAIVHGGRYENASEQRAHFGLKEDMLTPMERFMNQGQKEFPGFGALSQDADSKVKKTPLAYFTPKGEENV</sequence>
<gene>
    <name evidence="1" type="primary">nuoI</name>
    <name type="ordered locus">WS0482</name>
</gene>
<proteinExistence type="inferred from homology"/>
<keyword id="KW-0004">4Fe-4S</keyword>
<keyword id="KW-0997">Cell inner membrane</keyword>
<keyword id="KW-1003">Cell membrane</keyword>
<keyword id="KW-0408">Iron</keyword>
<keyword id="KW-0411">Iron-sulfur</keyword>
<keyword id="KW-0472">Membrane</keyword>
<keyword id="KW-0479">Metal-binding</keyword>
<keyword id="KW-0520">NAD</keyword>
<keyword id="KW-0874">Quinone</keyword>
<keyword id="KW-1185">Reference proteome</keyword>
<keyword id="KW-0677">Repeat</keyword>
<keyword id="KW-1278">Translocase</keyword>
<keyword id="KW-0830">Ubiquinone</keyword>
<accession>Q7MA42</accession>
<dbReference type="EC" id="7.1.1.-" evidence="1"/>
<dbReference type="EMBL" id="BX571658">
    <property type="protein sequence ID" value="CAE09622.1"/>
    <property type="molecule type" value="Genomic_DNA"/>
</dbReference>
<dbReference type="RefSeq" id="WP_011138422.1">
    <property type="nucleotide sequence ID" value="NC_005090.1"/>
</dbReference>
<dbReference type="SMR" id="Q7MA42"/>
<dbReference type="STRING" id="273121.WS0482"/>
<dbReference type="KEGG" id="wsu:WS0482"/>
<dbReference type="eggNOG" id="COG1143">
    <property type="taxonomic scope" value="Bacteria"/>
</dbReference>
<dbReference type="HOGENOM" id="CLU_067218_4_1_7"/>
<dbReference type="Proteomes" id="UP000000422">
    <property type="component" value="Chromosome"/>
</dbReference>
<dbReference type="GO" id="GO:0005886">
    <property type="term" value="C:plasma membrane"/>
    <property type="evidence" value="ECO:0007669"/>
    <property type="project" value="UniProtKB-SubCell"/>
</dbReference>
<dbReference type="GO" id="GO:0051539">
    <property type="term" value="F:4 iron, 4 sulfur cluster binding"/>
    <property type="evidence" value="ECO:0007669"/>
    <property type="project" value="UniProtKB-KW"/>
</dbReference>
<dbReference type="GO" id="GO:0005506">
    <property type="term" value="F:iron ion binding"/>
    <property type="evidence" value="ECO:0007669"/>
    <property type="project" value="UniProtKB-UniRule"/>
</dbReference>
<dbReference type="GO" id="GO:0050136">
    <property type="term" value="F:NADH:ubiquinone reductase (non-electrogenic) activity"/>
    <property type="evidence" value="ECO:0007669"/>
    <property type="project" value="UniProtKB-UniRule"/>
</dbReference>
<dbReference type="GO" id="GO:0048038">
    <property type="term" value="F:quinone binding"/>
    <property type="evidence" value="ECO:0007669"/>
    <property type="project" value="UniProtKB-KW"/>
</dbReference>
<dbReference type="GO" id="GO:0009060">
    <property type="term" value="P:aerobic respiration"/>
    <property type="evidence" value="ECO:0007669"/>
    <property type="project" value="TreeGrafter"/>
</dbReference>
<dbReference type="Gene3D" id="3.30.70.3270">
    <property type="match status" value="1"/>
</dbReference>
<dbReference type="HAMAP" id="MF_01351">
    <property type="entry name" value="NDH1_NuoI"/>
    <property type="match status" value="1"/>
</dbReference>
<dbReference type="InterPro" id="IPR017896">
    <property type="entry name" value="4Fe4S_Fe-S-bd"/>
</dbReference>
<dbReference type="InterPro" id="IPR017900">
    <property type="entry name" value="4Fe4S_Fe_S_CS"/>
</dbReference>
<dbReference type="InterPro" id="IPR010226">
    <property type="entry name" value="NADH_quinone_OxRdtase_chainI"/>
</dbReference>
<dbReference type="NCBIfam" id="TIGR01971">
    <property type="entry name" value="NuoI"/>
    <property type="match status" value="1"/>
</dbReference>
<dbReference type="NCBIfam" id="NF004542">
    <property type="entry name" value="PRK05888.2-3"/>
    <property type="match status" value="1"/>
</dbReference>
<dbReference type="PANTHER" id="PTHR10849:SF20">
    <property type="entry name" value="NADH DEHYDROGENASE [UBIQUINONE] IRON-SULFUR PROTEIN 8, MITOCHONDRIAL"/>
    <property type="match status" value="1"/>
</dbReference>
<dbReference type="PANTHER" id="PTHR10849">
    <property type="entry name" value="NADH DEHYDROGENASE UBIQUINONE IRON-SULFUR PROTEIN 8, MITOCHONDRIAL"/>
    <property type="match status" value="1"/>
</dbReference>
<dbReference type="Pfam" id="PF12838">
    <property type="entry name" value="Fer4_7"/>
    <property type="match status" value="1"/>
</dbReference>
<dbReference type="SUPFAM" id="SSF54862">
    <property type="entry name" value="4Fe-4S ferredoxins"/>
    <property type="match status" value="1"/>
</dbReference>
<dbReference type="PROSITE" id="PS00198">
    <property type="entry name" value="4FE4S_FER_1"/>
    <property type="match status" value="1"/>
</dbReference>
<dbReference type="PROSITE" id="PS51379">
    <property type="entry name" value="4FE4S_FER_2"/>
    <property type="match status" value="2"/>
</dbReference>
<reference key="1">
    <citation type="journal article" date="2003" name="Proc. Natl. Acad. Sci. U.S.A.">
        <title>Complete genome sequence and analysis of Wolinella succinogenes.</title>
        <authorList>
            <person name="Baar C."/>
            <person name="Eppinger M."/>
            <person name="Raddatz G."/>
            <person name="Simon J."/>
            <person name="Lanz C."/>
            <person name="Klimmek O."/>
            <person name="Nandakumar R."/>
            <person name="Gross R."/>
            <person name="Rosinus A."/>
            <person name="Keller H."/>
            <person name="Jagtap P."/>
            <person name="Linke B."/>
            <person name="Meyer F."/>
            <person name="Lederer H."/>
            <person name="Schuster S.C."/>
        </authorList>
    </citation>
    <scope>NUCLEOTIDE SEQUENCE [LARGE SCALE GENOMIC DNA]</scope>
    <source>
        <strain>ATCC 29543 / DSM 1740 / CCUG 13145 / JCM 31913 / LMG 7466 / NCTC 11488 / FDC 602W</strain>
    </source>
</reference>
<feature type="chain" id="PRO_0000245758" description="NADH-quinone oxidoreductase subunit I">
    <location>
        <begin position="1"/>
        <end position="205"/>
    </location>
</feature>
<feature type="domain" description="4Fe-4S ferredoxin-type 1" evidence="1">
    <location>
        <begin position="75"/>
        <end position="104"/>
    </location>
</feature>
<feature type="domain" description="4Fe-4S ferredoxin-type 2" evidence="1">
    <location>
        <begin position="114"/>
        <end position="143"/>
    </location>
</feature>
<feature type="binding site" evidence="1">
    <location>
        <position position="84"/>
    </location>
    <ligand>
        <name>[4Fe-4S] cluster</name>
        <dbReference type="ChEBI" id="CHEBI:49883"/>
        <label>1</label>
    </ligand>
</feature>
<feature type="binding site" evidence="1">
    <location>
        <position position="87"/>
    </location>
    <ligand>
        <name>[4Fe-4S] cluster</name>
        <dbReference type="ChEBI" id="CHEBI:49883"/>
        <label>1</label>
    </ligand>
</feature>
<feature type="binding site" evidence="1">
    <location>
        <position position="90"/>
    </location>
    <ligand>
        <name>[4Fe-4S] cluster</name>
        <dbReference type="ChEBI" id="CHEBI:49883"/>
        <label>1</label>
    </ligand>
</feature>
<feature type="binding site" evidence="1">
    <location>
        <position position="94"/>
    </location>
    <ligand>
        <name>[4Fe-4S] cluster</name>
        <dbReference type="ChEBI" id="CHEBI:49883"/>
        <label>2</label>
    </ligand>
</feature>
<feature type="binding site" evidence="1">
    <location>
        <position position="123"/>
    </location>
    <ligand>
        <name>[4Fe-4S] cluster</name>
        <dbReference type="ChEBI" id="CHEBI:49883"/>
        <label>2</label>
    </ligand>
</feature>
<feature type="binding site" evidence="1">
    <location>
        <position position="126"/>
    </location>
    <ligand>
        <name>[4Fe-4S] cluster</name>
        <dbReference type="ChEBI" id="CHEBI:49883"/>
        <label>2</label>
    </ligand>
</feature>
<feature type="binding site" evidence="1">
    <location>
        <position position="129"/>
    </location>
    <ligand>
        <name>[4Fe-4S] cluster</name>
        <dbReference type="ChEBI" id="CHEBI:49883"/>
        <label>2</label>
    </ligand>
</feature>
<feature type="binding site" evidence="1">
    <location>
        <position position="133"/>
    </location>
    <ligand>
        <name>[4Fe-4S] cluster</name>
        <dbReference type="ChEBI" id="CHEBI:49883"/>
        <label>1</label>
    </ligand>
</feature>
<evidence type="ECO:0000255" key="1">
    <source>
        <dbReference type="HAMAP-Rule" id="MF_01351"/>
    </source>
</evidence>
<name>NUOI_WOLSU</name>
<organism>
    <name type="scientific">Wolinella succinogenes (strain ATCC 29543 / DSM 1740 / CCUG 13145 / JCM 31913 / LMG 7466 / NCTC 11488 / FDC 602W)</name>
    <name type="common">Vibrio succinogenes</name>
    <dbReference type="NCBI Taxonomy" id="273121"/>
    <lineage>
        <taxon>Bacteria</taxon>
        <taxon>Pseudomonadati</taxon>
        <taxon>Campylobacterota</taxon>
        <taxon>Epsilonproteobacteria</taxon>
        <taxon>Campylobacterales</taxon>
        <taxon>Helicobacteraceae</taxon>
        <taxon>Wolinella</taxon>
    </lineage>
</organism>
<protein>
    <recommendedName>
        <fullName evidence="1">NADH-quinone oxidoreductase subunit I</fullName>
        <ecNumber evidence="1">7.1.1.-</ecNumber>
    </recommendedName>
    <alternativeName>
        <fullName evidence="1">NADH dehydrogenase I subunit I</fullName>
    </alternativeName>
    <alternativeName>
        <fullName evidence="1">NDH-1 subunit I</fullName>
    </alternativeName>
</protein>